<organism>
    <name type="scientific">Candida albicans (strain SC5314 / ATCC MYA-2876)</name>
    <name type="common">Yeast</name>
    <dbReference type="NCBI Taxonomy" id="237561"/>
    <lineage>
        <taxon>Eukaryota</taxon>
        <taxon>Fungi</taxon>
        <taxon>Dikarya</taxon>
        <taxon>Ascomycota</taxon>
        <taxon>Saccharomycotina</taxon>
        <taxon>Pichiomycetes</taxon>
        <taxon>Debaryomycetaceae</taxon>
        <taxon>Candida/Lodderomyces clade</taxon>
        <taxon>Candida</taxon>
    </lineage>
</organism>
<protein>
    <recommendedName>
        <fullName>Mediator of RNA polymerase II transcription subunit 11</fullName>
    </recommendedName>
    <alternativeName>
        <fullName>Mediator complex subunit 11</fullName>
    </alternativeName>
</protein>
<reference key="1">
    <citation type="journal article" date="2005" name="Genetics">
        <title>Sequence finishing and gene mapping for Candida albicans chromosome 7 and syntenic analysis against the Saccharomyces cerevisiae genome.</title>
        <authorList>
            <person name="Chibana H."/>
            <person name="Oka N."/>
            <person name="Nakayama H."/>
            <person name="Aoyama T."/>
            <person name="Magee B.B."/>
            <person name="Magee P.T."/>
            <person name="Mikami Y."/>
        </authorList>
    </citation>
    <scope>NUCLEOTIDE SEQUENCE [LARGE SCALE GENOMIC DNA]</scope>
    <source>
        <strain>SC5314 / ATCC MYA-2876</strain>
    </source>
</reference>
<reference key="2">
    <citation type="journal article" date="2004" name="Proc. Natl. Acad. Sci. U.S.A.">
        <title>The diploid genome sequence of Candida albicans.</title>
        <authorList>
            <person name="Jones T."/>
            <person name="Federspiel N.A."/>
            <person name="Chibana H."/>
            <person name="Dungan J."/>
            <person name="Kalman S."/>
            <person name="Magee B.B."/>
            <person name="Newport G."/>
            <person name="Thorstenson Y.R."/>
            <person name="Agabian N."/>
            <person name="Magee P.T."/>
            <person name="Davis R.W."/>
            <person name="Scherer S."/>
        </authorList>
    </citation>
    <scope>NUCLEOTIDE SEQUENCE [LARGE SCALE GENOMIC DNA]</scope>
    <source>
        <strain>SC5314 / ATCC MYA-2876</strain>
    </source>
</reference>
<reference key="3">
    <citation type="journal article" date="2007" name="Genome Biol.">
        <title>Assembly of the Candida albicans genome into sixteen supercontigs aligned on the eight chromosomes.</title>
        <authorList>
            <person name="van het Hoog M."/>
            <person name="Rast T.J."/>
            <person name="Martchenko M."/>
            <person name="Grindle S."/>
            <person name="Dignard D."/>
            <person name="Hogues H."/>
            <person name="Cuomo C."/>
            <person name="Berriman M."/>
            <person name="Scherer S."/>
            <person name="Magee B.B."/>
            <person name="Whiteway M."/>
            <person name="Chibana H."/>
            <person name="Nantel A."/>
            <person name="Magee P.T."/>
        </authorList>
    </citation>
    <scope>GENOME REANNOTATION</scope>
    <source>
        <strain>SC5314 / ATCC MYA-2876</strain>
    </source>
</reference>
<reference key="4">
    <citation type="journal article" date="2013" name="Genome Biol.">
        <title>Assembly of a phased diploid Candida albicans genome facilitates allele-specific measurements and provides a simple model for repeat and indel structure.</title>
        <authorList>
            <person name="Muzzey D."/>
            <person name="Schwartz K."/>
            <person name="Weissman J.S."/>
            <person name="Sherlock G."/>
        </authorList>
    </citation>
    <scope>NUCLEOTIDE SEQUENCE [LARGE SCALE GENOMIC DNA]</scope>
    <scope>GENOME REANNOTATION</scope>
    <source>
        <strain>SC5314 / ATCC MYA-2876</strain>
    </source>
</reference>
<name>MED11_CANAL</name>
<keyword id="KW-0010">Activator</keyword>
<keyword id="KW-0539">Nucleus</keyword>
<keyword id="KW-1185">Reference proteome</keyword>
<keyword id="KW-0804">Transcription</keyword>
<keyword id="KW-0805">Transcription regulation</keyword>
<proteinExistence type="inferred from homology"/>
<sequence>MSSLDNDKTENFIQERLDSLHEIDCKVVTLLDQFSSIFQSFYTKSKEDFSQQTSDIYSTLSKVAIDLRKEIKIMDDNIGAYDKNDDNVMILPISNVDQKNTKLGRKRLDLELAELKRLISDEKQVETLENESNNEIQPKTESDTNQVETNENGNDINNKESEDIEMKE</sequence>
<evidence type="ECO:0000250" key="1"/>
<evidence type="ECO:0000250" key="2">
    <source>
        <dbReference type="UniProtKB" id="Q99278"/>
    </source>
</evidence>
<evidence type="ECO:0000256" key="3">
    <source>
        <dbReference type="SAM" id="MobiDB-lite"/>
    </source>
</evidence>
<evidence type="ECO:0000305" key="4"/>
<comment type="function">
    <text evidence="2">Component of the Mediator complex, a coactivator involved in the regulated transcription of nearly all RNA polymerase II-dependent genes. Mediator functions as a bridge to convey information from gene-specific regulatory proteins to the basal RNA polymerase II transcription machinery. Mediator is recruited to promoters by direct interactions with regulatory proteins and serves as a scaffold for the assembly of a functional pre-initiation complex with RNA polymerase II and the general transcription factors (By similarity).</text>
</comment>
<comment type="subunit">
    <text evidence="1">Component of the Mediator complex.</text>
</comment>
<comment type="subcellular location">
    <subcellularLocation>
        <location evidence="1">Nucleus</location>
    </subcellularLocation>
</comment>
<comment type="similarity">
    <text evidence="4">Belongs to the Mediator complex subunit 11 family.</text>
</comment>
<feature type="chain" id="PRO_0000304318" description="Mediator of RNA polymerase II transcription subunit 11">
    <location>
        <begin position="1"/>
        <end position="168"/>
    </location>
</feature>
<feature type="region of interest" description="Disordered" evidence="3">
    <location>
        <begin position="126"/>
        <end position="168"/>
    </location>
</feature>
<feature type="compositionally biased region" description="Polar residues" evidence="3">
    <location>
        <begin position="130"/>
        <end position="156"/>
    </location>
</feature>
<feature type="compositionally biased region" description="Basic and acidic residues" evidence="3">
    <location>
        <begin position="157"/>
        <end position="168"/>
    </location>
</feature>
<gene>
    <name type="primary">MED11</name>
    <name type="ordered locus">CAALFM_C701290WA</name>
    <name type="ORF">CaJ7.0143</name>
    <name type="ORF">CaO19.6909</name>
</gene>
<dbReference type="EMBL" id="AP006852">
    <property type="protein sequence ID" value="BAE44649.1"/>
    <property type="molecule type" value="Genomic_DNA"/>
</dbReference>
<dbReference type="EMBL" id="CP017629">
    <property type="protein sequence ID" value="AOW30497.1"/>
    <property type="molecule type" value="Genomic_DNA"/>
</dbReference>
<dbReference type="RefSeq" id="XP_712481.1">
    <property type="nucleotide sequence ID" value="XM_707388.1"/>
</dbReference>
<dbReference type="SMR" id="Q59S43"/>
<dbReference type="BioGRID" id="1229003">
    <property type="interactions" value="2"/>
</dbReference>
<dbReference type="FunCoup" id="Q59S43">
    <property type="interactions" value="129"/>
</dbReference>
<dbReference type="STRING" id="237561.Q59S43"/>
<dbReference type="EnsemblFungi" id="C7_01290W_A-T">
    <property type="protein sequence ID" value="C7_01290W_A-T-p1"/>
    <property type="gene ID" value="C7_01290W_A"/>
</dbReference>
<dbReference type="GeneID" id="3645910"/>
<dbReference type="KEGG" id="cal:CAALFM_C701290WA"/>
<dbReference type="CGD" id="CAL0000188346">
    <property type="gene designation" value="MED11"/>
</dbReference>
<dbReference type="VEuPathDB" id="FungiDB:C7_01290W_A"/>
<dbReference type="eggNOG" id="ENOG502S3YW">
    <property type="taxonomic scope" value="Eukaryota"/>
</dbReference>
<dbReference type="HOGENOM" id="CLU_121031_0_0_1"/>
<dbReference type="InParanoid" id="Q59S43"/>
<dbReference type="OMA" id="IMDDNIG"/>
<dbReference type="OrthoDB" id="5418434at2759"/>
<dbReference type="Proteomes" id="UP000000559">
    <property type="component" value="Chromosome 7"/>
</dbReference>
<dbReference type="GO" id="GO:0016592">
    <property type="term" value="C:mediator complex"/>
    <property type="evidence" value="ECO:0007669"/>
    <property type="project" value="InterPro"/>
</dbReference>
<dbReference type="GO" id="GO:0003712">
    <property type="term" value="F:transcription coregulator activity"/>
    <property type="evidence" value="ECO:0007669"/>
    <property type="project" value="InterPro"/>
</dbReference>
<dbReference type="GO" id="GO:0006357">
    <property type="term" value="P:regulation of transcription by RNA polymerase II"/>
    <property type="evidence" value="ECO:0007669"/>
    <property type="project" value="InterPro"/>
</dbReference>
<dbReference type="Gene3D" id="1.10.287.3490">
    <property type="match status" value="1"/>
</dbReference>
<dbReference type="InterPro" id="IPR019404">
    <property type="entry name" value="Mediator_Med11"/>
</dbReference>
<dbReference type="Pfam" id="PF10280">
    <property type="entry name" value="Med11"/>
    <property type="match status" value="1"/>
</dbReference>
<accession>Q59S43</accession>
<accession>A0A1D8PQT5</accession>
<accession>Q3MPL1</accession>